<comment type="function">
    <text evidence="1">Activates KDO (a required 8-carbon sugar) for incorporation into bacterial lipopolysaccharide in Gram-negative bacteria.</text>
</comment>
<comment type="catalytic activity">
    <reaction evidence="1">
        <text>3-deoxy-alpha-D-manno-oct-2-ulosonate + CTP = CMP-3-deoxy-beta-D-manno-octulosonate + diphosphate</text>
        <dbReference type="Rhea" id="RHEA:23448"/>
        <dbReference type="ChEBI" id="CHEBI:33019"/>
        <dbReference type="ChEBI" id="CHEBI:37563"/>
        <dbReference type="ChEBI" id="CHEBI:85986"/>
        <dbReference type="ChEBI" id="CHEBI:85987"/>
        <dbReference type="EC" id="2.7.7.38"/>
    </reaction>
</comment>
<comment type="pathway">
    <text evidence="1">Nucleotide-sugar biosynthesis; CMP-3-deoxy-D-manno-octulosonate biosynthesis; CMP-3-deoxy-D-manno-octulosonate from 3-deoxy-D-manno-octulosonate and CTP: step 1/1.</text>
</comment>
<comment type="pathway">
    <text evidence="1">Bacterial outer membrane biogenesis; lipopolysaccharide biosynthesis.</text>
</comment>
<comment type="subcellular location">
    <subcellularLocation>
        <location evidence="1">Cytoplasm</location>
    </subcellularLocation>
</comment>
<comment type="similarity">
    <text evidence="1">Belongs to the KdsB family.</text>
</comment>
<sequence>MDFSVIIPARYASSRLPAKLLKDVHGKPLIQLTYENAINSGANRVIIATDDKRIETVANDFGALTCMTDEHHTSGTSRIAQVLEVLDIDNDEIIVNVQGDEPMLNPSVIDQVANNLATSSMQIATLCEQITNKEQYLDPNCVKVVFNKAGKALYFSRAAIPFFREAKDFDLKLCFKHVGIYAYRAWFIKQYLTMSKSSYEQVEKLEQLTVLNEGFDIHVAPACDGIGHGVDIQCDLDKVRKELN</sequence>
<dbReference type="EC" id="2.7.7.38" evidence="1"/>
<dbReference type="EMBL" id="CP000488">
    <property type="protein sequence ID" value="ABL02558.1"/>
    <property type="molecule type" value="Genomic_DNA"/>
</dbReference>
<dbReference type="RefSeq" id="WP_011738183.1">
    <property type="nucleotide sequence ID" value="NC_008610.1"/>
</dbReference>
<dbReference type="SMR" id="A1AXA1"/>
<dbReference type="STRING" id="413404.Rmag_0841"/>
<dbReference type="KEGG" id="rma:Rmag_0841"/>
<dbReference type="eggNOG" id="COG1212">
    <property type="taxonomic scope" value="Bacteria"/>
</dbReference>
<dbReference type="HOGENOM" id="CLU_065038_1_0_6"/>
<dbReference type="OrthoDB" id="9815559at2"/>
<dbReference type="UniPathway" id="UPA00030"/>
<dbReference type="UniPathway" id="UPA00358">
    <property type="reaction ID" value="UER00476"/>
</dbReference>
<dbReference type="Proteomes" id="UP000002587">
    <property type="component" value="Chromosome"/>
</dbReference>
<dbReference type="GO" id="GO:0005829">
    <property type="term" value="C:cytosol"/>
    <property type="evidence" value="ECO:0007669"/>
    <property type="project" value="TreeGrafter"/>
</dbReference>
<dbReference type="GO" id="GO:0008690">
    <property type="term" value="F:3-deoxy-manno-octulosonate cytidylyltransferase activity"/>
    <property type="evidence" value="ECO:0007669"/>
    <property type="project" value="UniProtKB-UniRule"/>
</dbReference>
<dbReference type="GO" id="GO:0033468">
    <property type="term" value="P:CMP-keto-3-deoxy-D-manno-octulosonic acid biosynthetic process"/>
    <property type="evidence" value="ECO:0007669"/>
    <property type="project" value="UniProtKB-UniRule"/>
</dbReference>
<dbReference type="GO" id="GO:0009103">
    <property type="term" value="P:lipopolysaccharide biosynthetic process"/>
    <property type="evidence" value="ECO:0007669"/>
    <property type="project" value="UniProtKB-UniRule"/>
</dbReference>
<dbReference type="CDD" id="cd02517">
    <property type="entry name" value="CMP-KDO-Synthetase"/>
    <property type="match status" value="1"/>
</dbReference>
<dbReference type="FunFam" id="3.90.550.10:FF:000011">
    <property type="entry name" value="3-deoxy-manno-octulosonate cytidylyltransferase"/>
    <property type="match status" value="1"/>
</dbReference>
<dbReference type="Gene3D" id="3.90.550.10">
    <property type="entry name" value="Spore Coat Polysaccharide Biosynthesis Protein SpsA, Chain A"/>
    <property type="match status" value="1"/>
</dbReference>
<dbReference type="HAMAP" id="MF_00057">
    <property type="entry name" value="KdsB"/>
    <property type="match status" value="1"/>
</dbReference>
<dbReference type="InterPro" id="IPR003329">
    <property type="entry name" value="Cytidylyl_trans"/>
</dbReference>
<dbReference type="InterPro" id="IPR004528">
    <property type="entry name" value="KdsB"/>
</dbReference>
<dbReference type="InterPro" id="IPR029044">
    <property type="entry name" value="Nucleotide-diphossugar_trans"/>
</dbReference>
<dbReference type="NCBIfam" id="TIGR00466">
    <property type="entry name" value="kdsB"/>
    <property type="match status" value="1"/>
</dbReference>
<dbReference type="NCBIfam" id="NF003950">
    <property type="entry name" value="PRK05450.1-3"/>
    <property type="match status" value="1"/>
</dbReference>
<dbReference type="NCBIfam" id="NF003952">
    <property type="entry name" value="PRK05450.1-5"/>
    <property type="match status" value="1"/>
</dbReference>
<dbReference type="NCBIfam" id="NF009905">
    <property type="entry name" value="PRK13368.1"/>
    <property type="match status" value="1"/>
</dbReference>
<dbReference type="PANTHER" id="PTHR42866">
    <property type="entry name" value="3-DEOXY-MANNO-OCTULOSONATE CYTIDYLYLTRANSFERASE"/>
    <property type="match status" value="1"/>
</dbReference>
<dbReference type="PANTHER" id="PTHR42866:SF2">
    <property type="entry name" value="3-DEOXY-MANNO-OCTULOSONATE CYTIDYLYLTRANSFERASE, MITOCHONDRIAL"/>
    <property type="match status" value="1"/>
</dbReference>
<dbReference type="Pfam" id="PF02348">
    <property type="entry name" value="CTP_transf_3"/>
    <property type="match status" value="1"/>
</dbReference>
<dbReference type="SUPFAM" id="SSF53448">
    <property type="entry name" value="Nucleotide-diphospho-sugar transferases"/>
    <property type="match status" value="1"/>
</dbReference>
<organism>
    <name type="scientific">Ruthia magnifica subsp. Calyptogena magnifica</name>
    <dbReference type="NCBI Taxonomy" id="413404"/>
    <lineage>
        <taxon>Bacteria</taxon>
        <taxon>Pseudomonadati</taxon>
        <taxon>Pseudomonadota</taxon>
        <taxon>Gammaproteobacteria</taxon>
        <taxon>Candidatus Pseudothioglobaceae</taxon>
        <taxon>Candidatus Ruthturnera</taxon>
    </lineage>
</organism>
<protein>
    <recommendedName>
        <fullName evidence="1">3-deoxy-manno-octulosonate cytidylyltransferase</fullName>
        <ecNumber evidence="1">2.7.7.38</ecNumber>
    </recommendedName>
    <alternativeName>
        <fullName evidence="1">CMP-2-keto-3-deoxyoctulosonic acid synthase</fullName>
        <shortName evidence="1">CKS</shortName>
        <shortName evidence="1">CMP-KDO synthase</shortName>
    </alternativeName>
</protein>
<keyword id="KW-0963">Cytoplasm</keyword>
<keyword id="KW-0448">Lipopolysaccharide biosynthesis</keyword>
<keyword id="KW-0548">Nucleotidyltransferase</keyword>
<keyword id="KW-0808">Transferase</keyword>
<name>KDSB_RUTMC</name>
<proteinExistence type="inferred from homology"/>
<gene>
    <name evidence="1" type="primary">kdsB</name>
    <name type="ordered locus">Rmag_0841</name>
</gene>
<accession>A1AXA1</accession>
<reference key="1">
    <citation type="journal article" date="2007" name="Science">
        <title>The Calyptogena magnifica chemoautotrophic symbiont genome.</title>
        <authorList>
            <person name="Newton I.L.G."/>
            <person name="Woyke T."/>
            <person name="Auchtung T.A."/>
            <person name="Dilly G.F."/>
            <person name="Dutton R.J."/>
            <person name="Fisher M.C."/>
            <person name="Fontanez K.M."/>
            <person name="Lau E."/>
            <person name="Stewart F.J."/>
            <person name="Richardson P.M."/>
            <person name="Barry K.W."/>
            <person name="Saunders E."/>
            <person name="Detter J.C."/>
            <person name="Wu D."/>
            <person name="Eisen J.A."/>
            <person name="Cavanaugh C.M."/>
        </authorList>
    </citation>
    <scope>NUCLEOTIDE SEQUENCE [LARGE SCALE GENOMIC DNA]</scope>
</reference>
<feature type="chain" id="PRO_1000091898" description="3-deoxy-manno-octulosonate cytidylyltransferase">
    <location>
        <begin position="1"/>
        <end position="244"/>
    </location>
</feature>
<evidence type="ECO:0000255" key="1">
    <source>
        <dbReference type="HAMAP-Rule" id="MF_00057"/>
    </source>
</evidence>